<proteinExistence type="evidence at transcript level"/>
<organismHost>
    <name type="scientific">Aves</name>
    <dbReference type="NCBI Taxonomy" id="8782"/>
</organismHost>
<organismHost>
    <name type="scientific">Homo sapiens</name>
    <name type="common">Human</name>
    <dbReference type="NCBI Taxonomy" id="9606"/>
</organismHost>
<organismHost>
    <name type="scientific">Sus scrofa</name>
    <name type="common">Pig</name>
    <dbReference type="NCBI Taxonomy" id="9823"/>
</organismHost>
<organism>
    <name type="scientific">Influenza A virus (strain A/Camel/Mongolia/1982 H1N1)</name>
    <dbReference type="NCBI Taxonomy" id="387191"/>
    <lineage>
        <taxon>Viruses</taxon>
        <taxon>Riboviria</taxon>
        <taxon>Orthornavirae</taxon>
        <taxon>Negarnaviricota</taxon>
        <taxon>Polyploviricotina</taxon>
        <taxon>Insthoviricetes</taxon>
        <taxon>Articulavirales</taxon>
        <taxon>Orthomyxoviridae</taxon>
        <taxon>Alphainfluenzavirus</taxon>
        <taxon>Alphainfluenzavirus influenzae</taxon>
        <taxon>Influenza A virus</taxon>
    </lineage>
</organism>
<sequence>FGLVCATCEQIADSQHRSHRQMVTTTNPLIRHENRMVLASTTAKAMEQMAGSSEQAAEAMEVASQARQMVQAMRTIGTHPSSSAGLKNDLLENLQAYQKRMGVQMQRFK</sequence>
<accession>P26147</accession>
<comment type="function">
    <text evidence="1">Plays critical roles in virus replication, from virus entry and uncoating to assembly and budding of the virus particle. M1 binding to ribonucleocapsids (RNPs) in nucleus seems to inhibit viral transcription. Interaction of viral NEP with M1-RNP is thought to promote nuclear export of the complex, which is targeted to the virion assembly site at the apical plasma membrane in polarized epithelial cells. Interactions with NA and HA may bring M1, a non-raft-associated protein, into lipid rafts. Forms a continuous shell on the inner side of the lipid bilayer in virion, where it binds the RNP. During virus entry into cell, the M2 ion channel acidifies the internal virion core, inducing M1 dissociation from the RNP. M1-free RNPs are transported to the nucleus, where viral transcription and replication can take place (By similarity).</text>
</comment>
<comment type="function">
    <text evidence="1">Determines the virion's shape: spherical or filamentous. Clinical isolates of influenza are characterized by the presence of significant proportion of filamentous virions, whereas after multiple passage on eggs or cell culture, virions have only spherical morphology. Filamentous virions are thought to be important to infect neighboring cells, and spherical virions more suited to spread through aerosol between hosts organisms (By similarity).</text>
</comment>
<comment type="subunit">
    <text evidence="1">Homodimer and homomultimer. Interacts with NEP. Binds ribonucleocapsid by both interacting with genomic RNA and NP protein. May interact with HA and NA. Cannot bind NP without genomic RNA (By similarity).</text>
</comment>
<comment type="subcellular location">
    <subcellularLocation>
        <location evidence="1">Virion membrane</location>
        <topology evidence="1">Multi-pass membrane protein</topology>
    </subcellularLocation>
    <subcellularLocation>
        <location evidence="1">Host nucleus</location>
    </subcellularLocation>
</comment>
<comment type="alternative products">
    <event type="alternative splicing"/>
    <isoform>
        <id>P26147-1</id>
        <name>M1</name>
        <sequence type="displayed"/>
    </isoform>
    <isoform>
        <id>P26147-2</id>
        <name>M2</name>
        <sequence type="not described"/>
    </isoform>
    <text>Only the first 9 residues are shared by the 2 isoforms.</text>
</comment>
<comment type="miscellaneous">
    <text>Most abundant protein in virion. When expressed alone can form virus-like particles in transfected cells.</text>
</comment>
<comment type="similarity">
    <text evidence="2">Belongs to the influenza viruses Matrix protein M1 family.</text>
</comment>
<feature type="chain" id="PRO_0000078852" description="Matrix protein 1">
    <location>
        <begin position="1" status="less than"/>
        <end position="109"/>
    </location>
</feature>
<feature type="region of interest" description="RNP-binding" evidence="1">
    <location>
        <begin position="22"/>
        <end position="109"/>
    </location>
</feature>
<feature type="non-terminal residue">
    <location>
        <position position="1"/>
    </location>
</feature>
<evidence type="ECO:0000250" key="1"/>
<evidence type="ECO:0000305" key="2"/>
<dbReference type="EMBL" id="M73978">
    <property type="protein sequence ID" value="AAA16906.1"/>
    <property type="molecule type" value="mRNA"/>
</dbReference>
<dbReference type="SMR" id="P26147"/>
<dbReference type="GO" id="GO:0042025">
    <property type="term" value="C:host cell nucleus"/>
    <property type="evidence" value="ECO:0007669"/>
    <property type="project" value="UniProtKB-SubCell"/>
</dbReference>
<dbReference type="GO" id="GO:0016020">
    <property type="term" value="C:membrane"/>
    <property type="evidence" value="ECO:0007669"/>
    <property type="project" value="UniProtKB-KW"/>
</dbReference>
<dbReference type="GO" id="GO:0055036">
    <property type="term" value="C:virion membrane"/>
    <property type="evidence" value="ECO:0007669"/>
    <property type="project" value="UniProtKB-SubCell"/>
</dbReference>
<dbReference type="GO" id="GO:0003723">
    <property type="term" value="F:RNA binding"/>
    <property type="evidence" value="ECO:0007669"/>
    <property type="project" value="UniProtKB-KW"/>
</dbReference>
<dbReference type="GO" id="GO:0039660">
    <property type="term" value="F:structural constituent of virion"/>
    <property type="evidence" value="ECO:0007669"/>
    <property type="project" value="UniProtKB-KW"/>
</dbReference>
<dbReference type="Gene3D" id="1.10.10.180">
    <property type="match status" value="1"/>
</dbReference>
<dbReference type="InterPro" id="IPR013188">
    <property type="entry name" value="Flu_matrix_M1_C"/>
</dbReference>
<dbReference type="InterPro" id="IPR015799">
    <property type="entry name" value="Flu_matrix_M1_N_sub2"/>
</dbReference>
<dbReference type="Pfam" id="PF08289">
    <property type="entry name" value="Flu_M1_C"/>
    <property type="match status" value="1"/>
</dbReference>
<dbReference type="SMART" id="SM00759">
    <property type="entry name" value="Flu_M1_C"/>
    <property type="match status" value="1"/>
</dbReference>
<gene>
    <name type="primary">M</name>
</gene>
<reference key="1">
    <citation type="journal article" date="1993" name="Virology">
        <title>A reassortant H1N1 influenza A virus caused fatal epizootics among camels in Mongolia.</title>
        <authorList>
            <person name="Yamnikova S.S."/>
            <person name="Mandler J."/>
            <person name="Bekh-Ochir Z.H."/>
            <person name="Dachtzeren P."/>
            <person name="Ludwig S."/>
            <person name="Lvov D.K."/>
            <person name="Scholtissek C."/>
        </authorList>
    </citation>
    <scope>NUCLEOTIDE SEQUENCE [MRNA]</scope>
</reference>
<name>M1_I82A2</name>
<protein>
    <recommendedName>
        <fullName>Matrix protein 1</fullName>
        <shortName>M1</shortName>
    </recommendedName>
</protein>
<keyword id="KW-0025">Alternative splicing</keyword>
<keyword id="KW-1048">Host nucleus</keyword>
<keyword id="KW-0472">Membrane</keyword>
<keyword id="KW-0694">RNA-binding</keyword>
<keyword id="KW-0468">Viral matrix protein</keyword>
<keyword id="KW-0946">Virion</keyword>